<protein>
    <recommendedName>
        <fullName>Uncharacterized protein MJ0450</fullName>
    </recommendedName>
</protein>
<feature type="chain" id="PRO_0000106881" description="Uncharacterized protein MJ0450">
    <location>
        <begin position="1"/>
        <end position="186"/>
    </location>
</feature>
<feature type="domain" description="CBS 1" evidence="1">
    <location>
        <begin position="10"/>
        <end position="69"/>
    </location>
</feature>
<feature type="domain" description="CBS 2" evidence="1">
    <location>
        <begin position="77"/>
        <end position="133"/>
    </location>
</feature>
<keyword id="KW-0129">CBS domain</keyword>
<keyword id="KW-1185">Reference proteome</keyword>
<keyword id="KW-0677">Repeat</keyword>
<name>Y450_METJA</name>
<organism>
    <name type="scientific">Methanocaldococcus jannaschii (strain ATCC 43067 / DSM 2661 / JAL-1 / JCM 10045 / NBRC 100440)</name>
    <name type="common">Methanococcus jannaschii</name>
    <dbReference type="NCBI Taxonomy" id="243232"/>
    <lineage>
        <taxon>Archaea</taxon>
        <taxon>Methanobacteriati</taxon>
        <taxon>Methanobacteriota</taxon>
        <taxon>Methanomada group</taxon>
        <taxon>Methanococci</taxon>
        <taxon>Methanococcales</taxon>
        <taxon>Methanocaldococcaceae</taxon>
        <taxon>Methanocaldococcus</taxon>
    </lineage>
</organism>
<evidence type="ECO:0000255" key="1">
    <source>
        <dbReference type="PROSITE-ProRule" id="PRU00703"/>
    </source>
</evidence>
<accession>Q57892</accession>
<sequence>MVGEIPVLLIMKKPIVVSGDVSVYDVAKLMVEQDVPCVLVVCERPNHESIEVATDKDIIKKVLIRKLPPDKVKVEDISSGKLVTIPPNTTIDEALEIMNKYKTNELFIVDDGKIVGVITEEDLIKIAPEIISTLKELVNYLLQIIDEVTSGDISDKSKEIQNINQGKDNKKDSESDIRKKKIMLIK</sequence>
<proteinExistence type="predicted"/>
<reference key="1">
    <citation type="journal article" date="1996" name="Science">
        <title>Complete genome sequence of the methanogenic archaeon, Methanococcus jannaschii.</title>
        <authorList>
            <person name="Bult C.J."/>
            <person name="White O."/>
            <person name="Olsen G.J."/>
            <person name="Zhou L."/>
            <person name="Fleischmann R.D."/>
            <person name="Sutton G.G."/>
            <person name="Blake J.A."/>
            <person name="FitzGerald L.M."/>
            <person name="Clayton R.A."/>
            <person name="Gocayne J.D."/>
            <person name="Kerlavage A.R."/>
            <person name="Dougherty B.A."/>
            <person name="Tomb J.-F."/>
            <person name="Adams M.D."/>
            <person name="Reich C.I."/>
            <person name="Overbeek R."/>
            <person name="Kirkness E.F."/>
            <person name="Weinstock K.G."/>
            <person name="Merrick J.M."/>
            <person name="Glodek A."/>
            <person name="Scott J.L."/>
            <person name="Geoghagen N.S.M."/>
            <person name="Weidman J.F."/>
            <person name="Fuhrmann J.L."/>
            <person name="Nguyen D."/>
            <person name="Utterback T.R."/>
            <person name="Kelley J.M."/>
            <person name="Peterson J.D."/>
            <person name="Sadow P.W."/>
            <person name="Hanna M.C."/>
            <person name="Cotton M.D."/>
            <person name="Roberts K.M."/>
            <person name="Hurst M.A."/>
            <person name="Kaine B.P."/>
            <person name="Borodovsky M."/>
            <person name="Klenk H.-P."/>
            <person name="Fraser C.M."/>
            <person name="Smith H.O."/>
            <person name="Woese C.R."/>
            <person name="Venter J.C."/>
        </authorList>
    </citation>
    <scope>NUCLEOTIDE SEQUENCE [LARGE SCALE GENOMIC DNA]</scope>
    <source>
        <strain>ATCC 43067 / DSM 2661 / JAL-1 / JCM 10045 / NBRC 100440</strain>
    </source>
</reference>
<gene>
    <name type="ordered locus">MJ0450</name>
</gene>
<dbReference type="EMBL" id="L77117">
    <property type="protein sequence ID" value="AAB98439.1"/>
    <property type="molecule type" value="Genomic_DNA"/>
</dbReference>
<dbReference type="PIR" id="B64356">
    <property type="entry name" value="B64356"/>
</dbReference>
<dbReference type="RefSeq" id="WP_010869949.1">
    <property type="nucleotide sequence ID" value="NC_000909.1"/>
</dbReference>
<dbReference type="SMR" id="Q57892"/>
<dbReference type="FunCoup" id="Q57892">
    <property type="interactions" value="7"/>
</dbReference>
<dbReference type="STRING" id="243232.MJ_0450"/>
<dbReference type="PaxDb" id="243232-MJ_0450"/>
<dbReference type="EnsemblBacteria" id="AAB98439">
    <property type="protein sequence ID" value="AAB98439"/>
    <property type="gene ID" value="MJ_0450"/>
</dbReference>
<dbReference type="GeneID" id="1451311"/>
<dbReference type="KEGG" id="mja:MJ_0450"/>
<dbReference type="eggNOG" id="arCOG00606">
    <property type="taxonomic scope" value="Archaea"/>
</dbReference>
<dbReference type="HOGENOM" id="CLU_124806_0_0_2"/>
<dbReference type="InParanoid" id="Q57892"/>
<dbReference type="OrthoDB" id="65817at2157"/>
<dbReference type="PhylomeDB" id="Q57892"/>
<dbReference type="Proteomes" id="UP000000805">
    <property type="component" value="Chromosome"/>
</dbReference>
<dbReference type="Gene3D" id="3.10.580.10">
    <property type="entry name" value="CBS-domain"/>
    <property type="match status" value="1"/>
</dbReference>
<dbReference type="InterPro" id="IPR000644">
    <property type="entry name" value="CBS_dom"/>
</dbReference>
<dbReference type="InterPro" id="IPR046342">
    <property type="entry name" value="CBS_dom_sf"/>
</dbReference>
<dbReference type="InterPro" id="IPR051257">
    <property type="entry name" value="Diverse_CBS-Domain"/>
</dbReference>
<dbReference type="PANTHER" id="PTHR43080:SF2">
    <property type="entry name" value="CBS DOMAIN-CONTAINING PROTEIN"/>
    <property type="match status" value="1"/>
</dbReference>
<dbReference type="PANTHER" id="PTHR43080">
    <property type="entry name" value="CBS DOMAIN-CONTAINING PROTEIN CBSX3, MITOCHONDRIAL"/>
    <property type="match status" value="1"/>
</dbReference>
<dbReference type="Pfam" id="PF00571">
    <property type="entry name" value="CBS"/>
    <property type="match status" value="2"/>
</dbReference>
<dbReference type="SMART" id="SM00116">
    <property type="entry name" value="CBS"/>
    <property type="match status" value="2"/>
</dbReference>
<dbReference type="SUPFAM" id="SSF54631">
    <property type="entry name" value="CBS-domain pair"/>
    <property type="match status" value="1"/>
</dbReference>
<dbReference type="PROSITE" id="PS51371">
    <property type="entry name" value="CBS"/>
    <property type="match status" value="2"/>
</dbReference>